<evidence type="ECO:0000305" key="1"/>
<protein>
    <recommendedName>
        <fullName>Protein TCL1B1</fullName>
    </recommendedName>
</protein>
<gene>
    <name type="primary">Tcl1b1</name>
</gene>
<sequence length="116" mass="13432">MAAAAFDPLGPLPVYLVSVRLGIYEDEHHRVWIVANVETSHSSHGNRRRTHVTVHLWKLIPQQVIPFNPLNYDFLPTTWKLESRNIYWATDGTHWRLLDHSQLGDTEQLILMLVLG</sequence>
<feature type="chain" id="PRO_0000184491" description="Protein TCL1B1">
    <location>
        <begin position="1"/>
        <end position="116"/>
    </location>
</feature>
<keyword id="KW-1185">Reference proteome</keyword>
<comment type="similarity">
    <text evidence="1">Belongs to the TCL1 family.</text>
</comment>
<accession>P56840</accession>
<proteinExistence type="inferred from homology"/>
<dbReference type="EMBL" id="AF195488">
    <property type="protein sequence ID" value="AAF12801.1"/>
    <property type="molecule type" value="mRNA"/>
</dbReference>
<dbReference type="EMBL" id="BC052337">
    <property type="protein sequence ID" value="AAH52337.1"/>
    <property type="molecule type" value="mRNA"/>
</dbReference>
<dbReference type="CCDS" id="CCDS36545.1"/>
<dbReference type="RefSeq" id="NP_038801.1">
    <property type="nucleotide sequence ID" value="NM_013773.2"/>
</dbReference>
<dbReference type="SMR" id="P56840"/>
<dbReference type="FunCoup" id="P56840">
    <property type="interactions" value="337"/>
</dbReference>
<dbReference type="STRING" id="10090.ENSMUSP00000082118"/>
<dbReference type="PaxDb" id="10090-ENSMUSP00000082118"/>
<dbReference type="DNASU" id="27379"/>
<dbReference type="Ensembl" id="ENSMUST00000085043.7">
    <property type="protein sequence ID" value="ENSMUSP00000082118.6"/>
    <property type="gene ID" value="ENSMUSG00000066359.7"/>
</dbReference>
<dbReference type="GeneID" id="27379"/>
<dbReference type="KEGG" id="mmu:27379"/>
<dbReference type="UCSC" id="uc007oxx.1">
    <property type="organism name" value="mouse"/>
</dbReference>
<dbReference type="AGR" id="MGI:1351601"/>
<dbReference type="CTD" id="27379"/>
<dbReference type="MGI" id="MGI:1351601">
    <property type="gene designation" value="Tcl1b1"/>
</dbReference>
<dbReference type="VEuPathDB" id="HostDB:ENSMUSG00000066359"/>
<dbReference type="eggNOG" id="ENOG502TEDJ">
    <property type="taxonomic scope" value="Eukaryota"/>
</dbReference>
<dbReference type="GeneTree" id="ENSGT00390000006885"/>
<dbReference type="HOGENOM" id="CLU_168379_1_0_1"/>
<dbReference type="InParanoid" id="P56840"/>
<dbReference type="OrthoDB" id="9630488at2759"/>
<dbReference type="PhylomeDB" id="P56840"/>
<dbReference type="TreeFam" id="TF340217"/>
<dbReference type="BioGRID-ORCS" id="27379">
    <property type="hits" value="0 hits in 77 CRISPR screens"/>
</dbReference>
<dbReference type="ChiTaRS" id="Tcl1b1">
    <property type="organism name" value="mouse"/>
</dbReference>
<dbReference type="PRO" id="PR:P56840"/>
<dbReference type="Proteomes" id="UP000000589">
    <property type="component" value="Chromosome 12"/>
</dbReference>
<dbReference type="RNAct" id="P56840">
    <property type="molecule type" value="protein"/>
</dbReference>
<dbReference type="Bgee" id="ENSMUSG00000066359">
    <property type="expression patterns" value="Expressed in animal zygote and 26 other cell types or tissues"/>
</dbReference>
<dbReference type="ExpressionAtlas" id="P56840">
    <property type="expression patterns" value="baseline and differential"/>
</dbReference>
<dbReference type="GO" id="GO:0043539">
    <property type="term" value="F:protein serine/threonine kinase activator activity"/>
    <property type="evidence" value="ECO:0007669"/>
    <property type="project" value="InterPro"/>
</dbReference>
<dbReference type="FunFam" id="2.40.15.10:FF:000004">
    <property type="entry name" value="Protein TCL1B4"/>
    <property type="match status" value="1"/>
</dbReference>
<dbReference type="Gene3D" id="2.40.15.10">
    <property type="entry name" value="TCL1/MTCP1"/>
    <property type="match status" value="1"/>
</dbReference>
<dbReference type="InterPro" id="IPR004832">
    <property type="entry name" value="TCL1_MTCP1"/>
</dbReference>
<dbReference type="InterPro" id="IPR036672">
    <property type="entry name" value="TCL1_MTCP1_sf"/>
</dbReference>
<dbReference type="PANTHER" id="PTHR14060">
    <property type="entry name" value="PROTEIN P13 MTCP-1"/>
    <property type="match status" value="1"/>
</dbReference>
<dbReference type="PANTHER" id="PTHR14060:SF2">
    <property type="entry name" value="T-CELL LEUKEMIA_LYMPHOMA PROTEIN 1B"/>
    <property type="match status" value="1"/>
</dbReference>
<dbReference type="Pfam" id="PF01840">
    <property type="entry name" value="TCL1_MTCP1"/>
    <property type="match status" value="1"/>
</dbReference>
<dbReference type="SUPFAM" id="SSF50904">
    <property type="entry name" value="Oncogene products"/>
    <property type="match status" value="1"/>
</dbReference>
<organism>
    <name type="scientific">Mus musculus</name>
    <name type="common">Mouse</name>
    <dbReference type="NCBI Taxonomy" id="10090"/>
    <lineage>
        <taxon>Eukaryota</taxon>
        <taxon>Metazoa</taxon>
        <taxon>Chordata</taxon>
        <taxon>Craniata</taxon>
        <taxon>Vertebrata</taxon>
        <taxon>Euteleostomi</taxon>
        <taxon>Mammalia</taxon>
        <taxon>Eutheria</taxon>
        <taxon>Euarchontoglires</taxon>
        <taxon>Glires</taxon>
        <taxon>Rodentia</taxon>
        <taxon>Myomorpha</taxon>
        <taxon>Muroidea</taxon>
        <taxon>Muridae</taxon>
        <taxon>Murinae</taxon>
        <taxon>Mus</taxon>
        <taxon>Mus</taxon>
    </lineage>
</organism>
<name>TCLB1_MOUSE</name>
<reference key="1">
    <citation type="journal article" date="1999" name="Proc. Natl. Acad. Sci. U.S.A.">
        <title>Genomic analysis of human and mouse TCL1 loci reveals a complex of tightly clustered genes.</title>
        <authorList>
            <person name="Hallas C."/>
            <person name="Pekarsky Y."/>
            <person name="Itoyama T."/>
            <person name="Varnum J."/>
            <person name="Bichi R."/>
            <person name="Rothstein J.L."/>
            <person name="Croce C.M."/>
        </authorList>
    </citation>
    <scope>NUCLEOTIDE SEQUENCE [MRNA]</scope>
</reference>
<reference key="2">
    <citation type="journal article" date="2004" name="Genome Res.">
        <title>The status, quality, and expansion of the NIH full-length cDNA project: the Mammalian Gene Collection (MGC).</title>
        <authorList>
            <consortium name="The MGC Project Team"/>
        </authorList>
    </citation>
    <scope>NUCLEOTIDE SEQUENCE [LARGE SCALE MRNA]</scope>
    <source>
        <strain>C57BL/6J</strain>
        <tissue>Egg</tissue>
    </source>
</reference>